<accession>B4PST0</accession>
<keyword id="KW-0053">Apoptosis</keyword>
<keyword id="KW-0378">Hydrolase</keyword>
<keyword id="KW-0472">Membrane</keyword>
<keyword id="KW-0496">Mitochondrion</keyword>
<keyword id="KW-0645">Protease</keyword>
<keyword id="KW-0720">Serine protease</keyword>
<keyword id="KW-0809">Transit peptide</keyword>
<keyword id="KW-0812">Transmembrane</keyword>
<keyword id="KW-1133">Transmembrane helix</keyword>
<keyword id="KW-0865">Zymogen</keyword>
<reference evidence="6" key="1">
    <citation type="journal article" date="2007" name="Nature">
        <title>Evolution of genes and genomes on the Drosophila phylogeny.</title>
        <authorList>
            <consortium name="Drosophila 12 genomes consortium"/>
        </authorList>
    </citation>
    <scope>NUCLEOTIDE SEQUENCE [LARGE SCALE GENOMIC DNA]</scope>
    <source>
        <strain evidence="6">Tai18E2 / Tucson 14021-0261.01</strain>
    </source>
</reference>
<sequence>MALRGSHRLEVIFKRCIASPVFHSHAANRRSSQLAIKGTDPSSNGNSGQDQQNGEQKAKGWRRLVRFFVPFSLGAAVSAAVIKREDFTPTIAASKMTGRRRDFNFIADVVAGCADSVVYIEIKDTRHFDYFSGQPITASNGSGFIIEQNGLILTNAHVVINKPHTMVQVRLSDGRTFPATIEDVDQTSDLATLRIQVNNLSVMRLGKSSTLRSGEWVVALGSPLALSNTVTAGVISSTQRASQELGLRNRDINYLQTDAAITFGNSGGPLVNLDGEAIGVNSMKVTAGISFAIPIDYVKVFLERAAEKRKKGSAYKTGYPVKRYMGITMLTLTPDILFELKSRSQNMPSHLTHGVLVWKVIVGSPAHSGGLQPGDIVTHINKKEIKNSSDVYDALADNSKNLDIVILRGVKQMHVTITPEDP</sequence>
<protein>
    <recommendedName>
        <fullName evidence="2">Serine protease HTRA2, mitochondrial</fullName>
        <ecNumber>3.4.21.108</ecNumber>
    </recommendedName>
    <alternativeName>
        <fullName evidence="2">High temperature requirement protein A2</fullName>
    </alternativeName>
</protein>
<dbReference type="EC" id="3.4.21.108"/>
<dbReference type="EMBL" id="CM000160">
    <property type="protein sequence ID" value="EDW97576.1"/>
    <property type="molecule type" value="Genomic_DNA"/>
</dbReference>
<dbReference type="SMR" id="B4PST0"/>
<dbReference type="EnsemblMetazoa" id="FBtr0272965">
    <property type="protein sequence ID" value="FBpp0271457"/>
    <property type="gene ID" value="FBgn0243468"/>
</dbReference>
<dbReference type="EnsemblMetazoa" id="XM_002097828.3">
    <property type="protein sequence ID" value="XP_002097864.1"/>
    <property type="gene ID" value="LOC6537306"/>
</dbReference>
<dbReference type="GeneID" id="6537306"/>
<dbReference type="KEGG" id="dya:Dyak_GE26447"/>
<dbReference type="CTD" id="27429"/>
<dbReference type="eggNOG" id="KOG1320">
    <property type="taxonomic scope" value="Eukaryota"/>
</dbReference>
<dbReference type="HOGENOM" id="CLU_020120_6_0_1"/>
<dbReference type="OMA" id="IMSPEGY"/>
<dbReference type="OrthoDB" id="4217619at2759"/>
<dbReference type="PhylomeDB" id="B4PST0"/>
<dbReference type="Proteomes" id="UP000002282">
    <property type="component" value="Chromosome 3R"/>
</dbReference>
<dbReference type="GO" id="GO:0005829">
    <property type="term" value="C:cytosol"/>
    <property type="evidence" value="ECO:0007669"/>
    <property type="project" value="EnsemblMetazoa"/>
</dbReference>
<dbReference type="GO" id="GO:0005758">
    <property type="term" value="C:mitochondrial intermembrane space"/>
    <property type="evidence" value="ECO:0007669"/>
    <property type="project" value="UniProtKB-SubCell"/>
</dbReference>
<dbReference type="GO" id="GO:0031966">
    <property type="term" value="C:mitochondrial membrane"/>
    <property type="evidence" value="ECO:0007669"/>
    <property type="project" value="UniProtKB-SubCell"/>
</dbReference>
<dbReference type="GO" id="GO:0016006">
    <property type="term" value="C:Nebenkern"/>
    <property type="evidence" value="ECO:0007669"/>
    <property type="project" value="EnsemblMetazoa"/>
</dbReference>
<dbReference type="GO" id="GO:0004252">
    <property type="term" value="F:serine-type endopeptidase activity"/>
    <property type="evidence" value="ECO:0007669"/>
    <property type="project" value="EnsemblMetazoa"/>
</dbReference>
<dbReference type="GO" id="GO:0006915">
    <property type="term" value="P:apoptotic process"/>
    <property type="evidence" value="ECO:0007669"/>
    <property type="project" value="UniProtKB-KW"/>
</dbReference>
<dbReference type="GO" id="GO:0035234">
    <property type="term" value="P:ectopic germ cell programmed cell death"/>
    <property type="evidence" value="ECO:0007669"/>
    <property type="project" value="EnsemblMetazoa"/>
</dbReference>
<dbReference type="GO" id="GO:0007005">
    <property type="term" value="P:mitochondrion organization"/>
    <property type="evidence" value="ECO:0007669"/>
    <property type="project" value="EnsemblMetazoa"/>
</dbReference>
<dbReference type="GO" id="GO:0043065">
    <property type="term" value="P:positive regulation of apoptotic process"/>
    <property type="evidence" value="ECO:0007669"/>
    <property type="project" value="EnsemblMetazoa"/>
</dbReference>
<dbReference type="GO" id="GO:0006508">
    <property type="term" value="P:proteolysis"/>
    <property type="evidence" value="ECO:0007669"/>
    <property type="project" value="UniProtKB-KW"/>
</dbReference>
<dbReference type="GO" id="GO:0007283">
    <property type="term" value="P:spermatogenesis"/>
    <property type="evidence" value="ECO:0007669"/>
    <property type="project" value="EnsemblMetazoa"/>
</dbReference>
<dbReference type="CDD" id="cd06785">
    <property type="entry name" value="cpPDZ_HtrA-like"/>
    <property type="match status" value="1"/>
</dbReference>
<dbReference type="FunFam" id="2.40.10.120:FF:000004">
    <property type="entry name" value="Serine protease HTRA2, mitochondrial"/>
    <property type="match status" value="1"/>
</dbReference>
<dbReference type="Gene3D" id="2.30.42.10">
    <property type="match status" value="1"/>
</dbReference>
<dbReference type="Gene3D" id="2.40.10.120">
    <property type="match status" value="1"/>
</dbReference>
<dbReference type="InterPro" id="IPR001478">
    <property type="entry name" value="PDZ"/>
</dbReference>
<dbReference type="InterPro" id="IPR041489">
    <property type="entry name" value="PDZ_6"/>
</dbReference>
<dbReference type="InterPro" id="IPR036034">
    <property type="entry name" value="PDZ_sf"/>
</dbReference>
<dbReference type="InterPro" id="IPR009003">
    <property type="entry name" value="Peptidase_S1_PA"/>
</dbReference>
<dbReference type="InterPro" id="IPR001940">
    <property type="entry name" value="Peptidase_S1C"/>
</dbReference>
<dbReference type="PANTHER" id="PTHR22939">
    <property type="entry name" value="SERINE PROTEASE FAMILY S1C HTRA-RELATED"/>
    <property type="match status" value="1"/>
</dbReference>
<dbReference type="PANTHER" id="PTHR22939:SF129">
    <property type="entry name" value="SERINE PROTEASE HTRA2, MITOCHONDRIAL"/>
    <property type="match status" value="1"/>
</dbReference>
<dbReference type="Pfam" id="PF17820">
    <property type="entry name" value="PDZ_6"/>
    <property type="match status" value="1"/>
</dbReference>
<dbReference type="Pfam" id="PF13365">
    <property type="entry name" value="Trypsin_2"/>
    <property type="match status" value="1"/>
</dbReference>
<dbReference type="PRINTS" id="PR00834">
    <property type="entry name" value="PROTEASES2C"/>
</dbReference>
<dbReference type="SMART" id="SM00228">
    <property type="entry name" value="PDZ"/>
    <property type="match status" value="1"/>
</dbReference>
<dbReference type="SUPFAM" id="SSF50156">
    <property type="entry name" value="PDZ domain-like"/>
    <property type="match status" value="1"/>
</dbReference>
<dbReference type="SUPFAM" id="SSF50494">
    <property type="entry name" value="Trypsin-like serine proteases"/>
    <property type="match status" value="1"/>
</dbReference>
<dbReference type="PROSITE" id="PS50106">
    <property type="entry name" value="PDZ"/>
    <property type="match status" value="1"/>
</dbReference>
<evidence type="ECO:0000250" key="1">
    <source>
        <dbReference type="UniProtKB" id="O43464"/>
    </source>
</evidence>
<evidence type="ECO:0000250" key="2">
    <source>
        <dbReference type="UniProtKB" id="Q9VFJ3"/>
    </source>
</evidence>
<evidence type="ECO:0000255" key="3"/>
<evidence type="ECO:0000255" key="4">
    <source>
        <dbReference type="PROSITE-ProRule" id="PRU00143"/>
    </source>
</evidence>
<evidence type="ECO:0000256" key="5">
    <source>
        <dbReference type="SAM" id="MobiDB-lite"/>
    </source>
</evidence>
<evidence type="ECO:0000312" key="6">
    <source>
        <dbReference type="EMBL" id="EDW97576.1"/>
    </source>
</evidence>
<name>HTRA2_DROYA</name>
<gene>
    <name evidence="2" type="primary">HtrA2</name>
    <name type="ORF">GE26447</name>
</gene>
<organism>
    <name type="scientific">Drosophila yakuba</name>
    <name type="common">Fruit fly</name>
    <dbReference type="NCBI Taxonomy" id="7245"/>
    <lineage>
        <taxon>Eukaryota</taxon>
        <taxon>Metazoa</taxon>
        <taxon>Ecdysozoa</taxon>
        <taxon>Arthropoda</taxon>
        <taxon>Hexapoda</taxon>
        <taxon>Insecta</taxon>
        <taxon>Pterygota</taxon>
        <taxon>Neoptera</taxon>
        <taxon>Endopterygota</taxon>
        <taxon>Diptera</taxon>
        <taxon>Brachycera</taxon>
        <taxon>Muscomorpha</taxon>
        <taxon>Ephydroidea</taxon>
        <taxon>Drosophilidae</taxon>
        <taxon>Drosophila</taxon>
        <taxon>Sophophora</taxon>
    </lineage>
</organism>
<feature type="transit peptide" description="Mitochondrion" evidence="3">
    <location>
        <begin position="1"/>
        <end position="17"/>
    </location>
</feature>
<feature type="propeptide" id="PRO_0000382201" evidence="3">
    <location>
        <begin position="18"/>
        <end position="74"/>
    </location>
</feature>
<feature type="chain" id="PRO_0000382202" description="Serine protease HTRA2, mitochondrial" evidence="2">
    <location>
        <begin position="75"/>
        <end position="422"/>
    </location>
</feature>
<feature type="transmembrane region" description="Helical" evidence="3">
    <location>
        <begin position="64"/>
        <end position="82"/>
    </location>
</feature>
<feature type="domain" description="PDZ" evidence="4">
    <location>
        <begin position="325"/>
        <end position="410"/>
    </location>
</feature>
<feature type="region of interest" description="Disordered" evidence="5">
    <location>
        <begin position="29"/>
        <end position="56"/>
    </location>
</feature>
<feature type="region of interest" description="Serine protease" evidence="3">
    <location>
        <begin position="139"/>
        <end position="302"/>
    </location>
</feature>
<feature type="short sequence motif" description="IAP-binding" evidence="3">
    <location>
        <begin position="75"/>
        <end position="78"/>
    </location>
</feature>
<feature type="short sequence motif" description="IAP-binding" evidence="3">
    <location>
        <begin position="94"/>
        <end position="97"/>
    </location>
</feature>
<feature type="compositionally biased region" description="Polar residues" evidence="5">
    <location>
        <begin position="29"/>
        <end position="55"/>
    </location>
</feature>
<feature type="active site" description="Charge relay system" evidence="1">
    <location>
        <position position="157"/>
    </location>
</feature>
<feature type="active site" description="Charge relay system" evidence="1">
    <location>
        <position position="189"/>
    </location>
</feature>
<feature type="active site" description="Charge relay system" evidence="2">
    <location>
        <position position="266"/>
    </location>
</feature>
<comment type="function">
    <text evidence="2">Serine protease that shows proteolytic activity against a non-specific substrate beta-casein. Promotes or induces cell death either by direct binding to and inhibition of BIRC proteins (also called inhibitor of apoptosis proteins, IAPs), leading to an increase in caspase activity, or by a BIRC inhibition-independent, caspase-independent and serine protease activity-dependent mechanism. Can antagonize antiapoptotic activity of th/Diap1 by directly inducing the degradation of th/Diap1 (By similarity).</text>
</comment>
<comment type="catalytic activity">
    <reaction>
        <text>Cleavage of non-polar aliphatic amino-acids at the P1 position, with a preference for Val, Ile and Met. At the P2 and P3 positions, Arg is selected most strongly with a secondary preference for other hydrophilic residues.</text>
        <dbReference type="EC" id="3.4.21.108"/>
    </reaction>
</comment>
<comment type="subunit">
    <text evidence="2">Interacts with th/DIAP1 (via BIR 2 domain).</text>
</comment>
<comment type="subcellular location">
    <subcellularLocation>
        <location evidence="2">Mitochondrion intermembrane space</location>
        <topology evidence="3">Single-pass membrane protein</topology>
    </subcellularLocation>
    <subcellularLocation>
        <location evidence="2">Mitochondrion membrane</location>
        <topology evidence="3">Single-pass membrane protein</topology>
    </subcellularLocation>
    <text evidence="2">Predominantly present in the intermembrane space. Released into the cytosol following apoptotic stimuli, such as UV treatment. The extramitochondrial protein does not diffuse throughout the cytosol but stays near the mitochondria.</text>
</comment>
<comment type="similarity">
    <text evidence="3">Belongs to the peptidase S1C family.</text>
</comment>
<proteinExistence type="inferred from homology"/>